<name>Y119_OSHVF</name>
<organismHost>
    <name type="scientific">Magallana gigas</name>
    <name type="common">Pacific oyster</name>
    <name type="synonym">Crassostrea gigas</name>
    <dbReference type="NCBI Taxonomy" id="29159"/>
</organismHost>
<organismHost>
    <name type="scientific">Pecten maximus</name>
    <name type="common">King scallop</name>
    <name type="synonym">Pilgrim's clam</name>
    <dbReference type="NCBI Taxonomy" id="6579"/>
</organismHost>
<reference key="1">
    <citation type="journal article" date="2005" name="J. Gen. Virol.">
        <title>A novel class of herpesvirus with bivalve hosts.</title>
        <authorList>
            <person name="Davison A.J."/>
            <person name="Trus B.L."/>
            <person name="Cheng N."/>
            <person name="Steven A.C."/>
            <person name="Watson M.S."/>
            <person name="Cunningham C."/>
            <person name="Le Deuff R.M."/>
            <person name="Renault T."/>
        </authorList>
    </citation>
    <scope>NUCLEOTIDE SEQUENCE [LARGE SCALE GENOMIC DNA]</scope>
</reference>
<protein>
    <recommendedName>
        <fullName>Uncharacterized protein ORF119</fullName>
    </recommendedName>
</protein>
<organism>
    <name type="scientific">Ostreid herpesvirus 1 (isolate France)</name>
    <name type="common">OsHV-1</name>
    <name type="synonym">Pacific oyster herpesvirus</name>
    <dbReference type="NCBI Taxonomy" id="654903"/>
    <lineage>
        <taxon>Viruses</taxon>
        <taxon>Duplodnaviria</taxon>
        <taxon>Heunggongvirae</taxon>
        <taxon>Peploviricota</taxon>
        <taxon>Herviviricetes</taxon>
        <taxon>Herpesvirales</taxon>
        <taxon>Malacoherpesviridae</taxon>
        <taxon>Ostreavirus</taxon>
        <taxon>Ostreavirus ostreidmalaco1</taxon>
        <taxon>Ostreid herpesvirus 1</taxon>
    </lineage>
</organism>
<gene>
    <name type="ORF">ORF119</name>
</gene>
<dbReference type="EMBL" id="AY509253">
    <property type="protein sequence ID" value="AAS01008.1"/>
    <property type="molecule type" value="Genomic_DNA"/>
</dbReference>
<dbReference type="EMBL" id="AY509253">
    <property type="protein sequence ID" value="AAS01017.1"/>
    <property type="molecule type" value="Genomic_DNA"/>
</dbReference>
<dbReference type="RefSeq" id="YP_024661.1">
    <property type="nucleotide sequence ID" value="NC_005881.2"/>
</dbReference>
<dbReference type="RefSeq" id="YP_024670.1">
    <property type="nucleotide sequence ID" value="NC_005881.2"/>
</dbReference>
<dbReference type="KEGG" id="vg:2948153"/>
<dbReference type="KEGG" id="vg:2948185"/>
<dbReference type="Proteomes" id="UP000007021">
    <property type="component" value="Segment"/>
</dbReference>
<sequence length="192" mass="22193">MAQAMINMMKQHPAHWAVLEGNLAQFMIHLDDADEVDPITGDTLLMAILCKDWEETRDKMVWVHMLIQKAKMMSQYINICKLNDSGRCPADALNALANEELARYIDVNILKEEFHELGLYIRGQQCSIEGLENEWVKVDRVPPITIKVPEQYKIETIITPRVPPMTIRVPAKYRMCPPLLIKVPIQYRLVRP</sequence>
<keyword id="KW-1185">Reference proteome</keyword>
<feature type="chain" id="PRO_0000385131" description="Uncharacterized protein ORF119">
    <location>
        <begin position="1"/>
        <end position="192"/>
    </location>
</feature>
<accession>Q6R798</accession>
<proteinExistence type="predicted"/>